<dbReference type="EMBL" id="CP000825">
    <property type="protein sequence ID" value="ABV51431.1"/>
    <property type="molecule type" value="Genomic_DNA"/>
</dbReference>
<dbReference type="RefSeq" id="WP_012008438.1">
    <property type="nucleotide sequence ID" value="NC_009840.1"/>
</dbReference>
<dbReference type="SMR" id="A8G750"/>
<dbReference type="STRING" id="93060.P9215_18181"/>
<dbReference type="KEGG" id="pmh:P9215_18181"/>
<dbReference type="eggNOG" id="COG0198">
    <property type="taxonomic scope" value="Bacteria"/>
</dbReference>
<dbReference type="HOGENOM" id="CLU_093315_2_0_3"/>
<dbReference type="OrthoDB" id="9807419at2"/>
<dbReference type="Proteomes" id="UP000002014">
    <property type="component" value="Chromosome"/>
</dbReference>
<dbReference type="GO" id="GO:1990904">
    <property type="term" value="C:ribonucleoprotein complex"/>
    <property type="evidence" value="ECO:0007669"/>
    <property type="project" value="UniProtKB-KW"/>
</dbReference>
<dbReference type="GO" id="GO:0005840">
    <property type="term" value="C:ribosome"/>
    <property type="evidence" value="ECO:0007669"/>
    <property type="project" value="UniProtKB-KW"/>
</dbReference>
<dbReference type="GO" id="GO:0019843">
    <property type="term" value="F:rRNA binding"/>
    <property type="evidence" value="ECO:0007669"/>
    <property type="project" value="UniProtKB-UniRule"/>
</dbReference>
<dbReference type="GO" id="GO:0003735">
    <property type="term" value="F:structural constituent of ribosome"/>
    <property type="evidence" value="ECO:0007669"/>
    <property type="project" value="InterPro"/>
</dbReference>
<dbReference type="GO" id="GO:0006412">
    <property type="term" value="P:translation"/>
    <property type="evidence" value="ECO:0007669"/>
    <property type="project" value="UniProtKB-UniRule"/>
</dbReference>
<dbReference type="CDD" id="cd06089">
    <property type="entry name" value="KOW_RPL26"/>
    <property type="match status" value="1"/>
</dbReference>
<dbReference type="Gene3D" id="2.30.30.30">
    <property type="match status" value="1"/>
</dbReference>
<dbReference type="HAMAP" id="MF_01326_B">
    <property type="entry name" value="Ribosomal_uL24_B"/>
    <property type="match status" value="1"/>
</dbReference>
<dbReference type="InterPro" id="IPR005824">
    <property type="entry name" value="KOW"/>
</dbReference>
<dbReference type="InterPro" id="IPR014722">
    <property type="entry name" value="Rib_uL2_dom2"/>
</dbReference>
<dbReference type="InterPro" id="IPR003256">
    <property type="entry name" value="Ribosomal_uL24"/>
</dbReference>
<dbReference type="InterPro" id="IPR005825">
    <property type="entry name" value="Ribosomal_uL24_CS"/>
</dbReference>
<dbReference type="InterPro" id="IPR041988">
    <property type="entry name" value="Ribosomal_uL24_KOW"/>
</dbReference>
<dbReference type="InterPro" id="IPR008991">
    <property type="entry name" value="Translation_prot_SH3-like_sf"/>
</dbReference>
<dbReference type="NCBIfam" id="TIGR01079">
    <property type="entry name" value="rplX_bact"/>
    <property type="match status" value="1"/>
</dbReference>
<dbReference type="PANTHER" id="PTHR12903">
    <property type="entry name" value="MITOCHONDRIAL RIBOSOMAL PROTEIN L24"/>
    <property type="match status" value="1"/>
</dbReference>
<dbReference type="Pfam" id="PF00467">
    <property type="entry name" value="KOW"/>
    <property type="match status" value="1"/>
</dbReference>
<dbReference type="Pfam" id="PF17136">
    <property type="entry name" value="ribosomal_L24"/>
    <property type="match status" value="1"/>
</dbReference>
<dbReference type="SMART" id="SM00739">
    <property type="entry name" value="KOW"/>
    <property type="match status" value="1"/>
</dbReference>
<dbReference type="SUPFAM" id="SSF50104">
    <property type="entry name" value="Translation proteins SH3-like domain"/>
    <property type="match status" value="1"/>
</dbReference>
<dbReference type="PROSITE" id="PS01108">
    <property type="entry name" value="RIBOSOMAL_L24"/>
    <property type="match status" value="1"/>
</dbReference>
<comment type="function">
    <text evidence="1">One of two assembly initiator proteins, it binds directly to the 5'-end of the 23S rRNA, where it nucleates assembly of the 50S subunit.</text>
</comment>
<comment type="function">
    <text evidence="1">One of the proteins that surrounds the polypeptide exit tunnel on the outside of the subunit.</text>
</comment>
<comment type="subunit">
    <text evidence="1">Part of the 50S ribosomal subunit.</text>
</comment>
<comment type="similarity">
    <text evidence="1">Belongs to the universal ribosomal protein uL24 family.</text>
</comment>
<name>RL24_PROM2</name>
<protein>
    <recommendedName>
        <fullName evidence="1">Large ribosomal subunit protein uL24</fullName>
    </recommendedName>
    <alternativeName>
        <fullName evidence="2">50S ribosomal protein L24</fullName>
    </alternativeName>
</protein>
<proteinExistence type="inferred from homology"/>
<keyword id="KW-0687">Ribonucleoprotein</keyword>
<keyword id="KW-0689">Ribosomal protein</keyword>
<keyword id="KW-0694">RNA-binding</keyword>
<keyword id="KW-0699">rRNA-binding</keyword>
<organism>
    <name type="scientific">Prochlorococcus marinus (strain MIT 9215)</name>
    <dbReference type="NCBI Taxonomy" id="93060"/>
    <lineage>
        <taxon>Bacteria</taxon>
        <taxon>Bacillati</taxon>
        <taxon>Cyanobacteriota</taxon>
        <taxon>Cyanophyceae</taxon>
        <taxon>Synechococcales</taxon>
        <taxon>Prochlorococcaceae</taxon>
        <taxon>Prochlorococcus</taxon>
    </lineage>
</organism>
<feature type="chain" id="PRO_0000355707" description="Large ribosomal subunit protein uL24">
    <location>
        <begin position="1"/>
        <end position="118"/>
    </location>
</feature>
<sequence length="118" mass="13481">MLDSLKQKKNFQRIKMRIKTGDLVKVINGKEKGKTGEVLKTIPLENKVVVKGINLRTKHVKPTQEGETGRILTEEASLHASNVMFFSKEKNLTSKIEYFIDKEGVKKRRLKKTGEVID</sequence>
<accession>A8G750</accession>
<gene>
    <name evidence="1" type="primary">rplX</name>
    <name evidence="1" type="synonym">rpl24</name>
    <name type="ordered locus">P9215_18181</name>
</gene>
<evidence type="ECO:0000255" key="1">
    <source>
        <dbReference type="HAMAP-Rule" id="MF_01326"/>
    </source>
</evidence>
<evidence type="ECO:0000305" key="2"/>
<reference key="1">
    <citation type="journal article" date="2007" name="PLoS Genet.">
        <title>Patterns and implications of gene gain and loss in the evolution of Prochlorococcus.</title>
        <authorList>
            <person name="Kettler G.C."/>
            <person name="Martiny A.C."/>
            <person name="Huang K."/>
            <person name="Zucker J."/>
            <person name="Coleman M.L."/>
            <person name="Rodrigue S."/>
            <person name="Chen F."/>
            <person name="Lapidus A."/>
            <person name="Ferriera S."/>
            <person name="Johnson J."/>
            <person name="Steglich C."/>
            <person name="Church G.M."/>
            <person name="Richardson P."/>
            <person name="Chisholm S.W."/>
        </authorList>
    </citation>
    <scope>NUCLEOTIDE SEQUENCE [LARGE SCALE GENOMIC DNA]</scope>
    <source>
        <strain>MIT 9215</strain>
    </source>
</reference>